<reference key="1">
    <citation type="journal article" date="2000" name="Nucleic Acids Res.">
        <title>Complete genome sequence of the alkaliphilic bacterium Bacillus halodurans and genomic sequence comparison with Bacillus subtilis.</title>
        <authorList>
            <person name="Takami H."/>
            <person name="Nakasone K."/>
            <person name="Takaki Y."/>
            <person name="Maeno G."/>
            <person name="Sasaki R."/>
            <person name="Masui N."/>
            <person name="Fuji F."/>
            <person name="Hirama C."/>
            <person name="Nakamura Y."/>
            <person name="Ogasawara N."/>
            <person name="Kuhara S."/>
            <person name="Horikoshi K."/>
        </authorList>
    </citation>
    <scope>NUCLEOTIDE SEQUENCE [LARGE SCALE GENOMIC DNA]</scope>
    <source>
        <strain>ATCC BAA-125 / DSM 18197 / FERM 7344 / JCM 9153 / C-125</strain>
    </source>
</reference>
<sequence length="190" mass="21240">MKPLILASGSPRRKQLLEQMNVPFTVCKSTIDETFDPTFPPDEVVQQLARQKAQDVAKKHEDSFILAADTIVVFQGRILGKPATEQEARQMLSQLSDQSHEVLTGVALLHQGQVETFVETTEVRFWPLTDTEIETYLQTGEPFDKAGAYGIQGLGAYLVKELKGDYYNVVGLPLSRTVRALKVHGFSTRF</sequence>
<gene>
    <name type="primary">maf</name>
    <name type="ordered locus">BH3033</name>
</gene>
<organism>
    <name type="scientific">Halalkalibacterium halodurans (strain ATCC BAA-125 / DSM 18197 / FERM 7344 / JCM 9153 / C-125)</name>
    <name type="common">Bacillus halodurans</name>
    <dbReference type="NCBI Taxonomy" id="272558"/>
    <lineage>
        <taxon>Bacteria</taxon>
        <taxon>Bacillati</taxon>
        <taxon>Bacillota</taxon>
        <taxon>Bacilli</taxon>
        <taxon>Bacillales</taxon>
        <taxon>Bacillaceae</taxon>
        <taxon>Halalkalibacterium (ex Joshi et al. 2022)</taxon>
    </lineage>
</organism>
<feature type="chain" id="PRO_0000122973" description="dTTP/UTP pyrophosphatase">
    <location>
        <begin position="1"/>
        <end position="190"/>
    </location>
</feature>
<feature type="active site" description="Proton acceptor" evidence="1">
    <location>
        <position position="69"/>
    </location>
</feature>
<feature type="site" description="Important for substrate specificity" evidence="1">
    <location>
        <position position="12"/>
    </location>
</feature>
<feature type="site" description="Important for substrate specificity" evidence="1">
    <location>
        <position position="70"/>
    </location>
</feature>
<feature type="site" description="Important for substrate specificity" evidence="1">
    <location>
        <position position="152"/>
    </location>
</feature>
<protein>
    <recommendedName>
        <fullName evidence="1">dTTP/UTP pyrophosphatase</fullName>
        <shortName evidence="1">dTTPase/UTPase</shortName>
        <ecNumber evidence="1">3.6.1.9</ecNumber>
    </recommendedName>
    <alternativeName>
        <fullName evidence="1">Nucleoside triphosphate pyrophosphatase</fullName>
    </alternativeName>
    <alternativeName>
        <fullName evidence="1">Nucleotide pyrophosphatase</fullName>
        <shortName evidence="1">Nucleotide PPase</shortName>
    </alternativeName>
</protein>
<evidence type="ECO:0000255" key="1">
    <source>
        <dbReference type="HAMAP-Rule" id="MF_00528"/>
    </source>
</evidence>
<evidence type="ECO:0000305" key="2"/>
<comment type="function">
    <text evidence="1">Nucleoside triphosphate pyrophosphatase that hydrolyzes dTTP and UTP. May have a dual role in cell division arrest and in preventing the incorporation of modified nucleotides into cellular nucleic acids.</text>
</comment>
<comment type="catalytic activity">
    <reaction evidence="1">
        <text>dTTP + H2O = dTMP + diphosphate + H(+)</text>
        <dbReference type="Rhea" id="RHEA:28534"/>
        <dbReference type="ChEBI" id="CHEBI:15377"/>
        <dbReference type="ChEBI" id="CHEBI:15378"/>
        <dbReference type="ChEBI" id="CHEBI:33019"/>
        <dbReference type="ChEBI" id="CHEBI:37568"/>
        <dbReference type="ChEBI" id="CHEBI:63528"/>
        <dbReference type="EC" id="3.6.1.9"/>
    </reaction>
</comment>
<comment type="catalytic activity">
    <reaction evidence="1">
        <text>UTP + H2O = UMP + diphosphate + H(+)</text>
        <dbReference type="Rhea" id="RHEA:29395"/>
        <dbReference type="ChEBI" id="CHEBI:15377"/>
        <dbReference type="ChEBI" id="CHEBI:15378"/>
        <dbReference type="ChEBI" id="CHEBI:33019"/>
        <dbReference type="ChEBI" id="CHEBI:46398"/>
        <dbReference type="ChEBI" id="CHEBI:57865"/>
        <dbReference type="EC" id="3.6.1.9"/>
    </reaction>
</comment>
<comment type="cofactor">
    <cofactor evidence="1">
        <name>a divalent metal cation</name>
        <dbReference type="ChEBI" id="CHEBI:60240"/>
    </cofactor>
</comment>
<comment type="subcellular location">
    <subcellularLocation>
        <location evidence="1 2">Cytoplasm</location>
    </subcellularLocation>
</comment>
<comment type="similarity">
    <text evidence="1">Belongs to the Maf family. YhdE subfamily.</text>
</comment>
<keyword id="KW-0963">Cytoplasm</keyword>
<keyword id="KW-0378">Hydrolase</keyword>
<keyword id="KW-0546">Nucleotide metabolism</keyword>
<keyword id="KW-1185">Reference proteome</keyword>
<dbReference type="EC" id="3.6.1.9" evidence="1"/>
<dbReference type="EMBL" id="BA000004">
    <property type="protein sequence ID" value="BAB06752.1"/>
    <property type="molecule type" value="Genomic_DNA"/>
</dbReference>
<dbReference type="PIR" id="A84029">
    <property type="entry name" value="A84029"/>
</dbReference>
<dbReference type="RefSeq" id="WP_010899177.1">
    <property type="nucleotide sequence ID" value="NC_002570.2"/>
</dbReference>
<dbReference type="SMR" id="Q9K8H3"/>
<dbReference type="STRING" id="272558.gene:10728943"/>
<dbReference type="GeneID" id="87598555"/>
<dbReference type="KEGG" id="bha:BH3033"/>
<dbReference type="eggNOG" id="COG0424">
    <property type="taxonomic scope" value="Bacteria"/>
</dbReference>
<dbReference type="HOGENOM" id="CLU_040416_0_0_9"/>
<dbReference type="OrthoDB" id="9807767at2"/>
<dbReference type="Proteomes" id="UP000001258">
    <property type="component" value="Chromosome"/>
</dbReference>
<dbReference type="GO" id="GO:0005737">
    <property type="term" value="C:cytoplasm"/>
    <property type="evidence" value="ECO:0007669"/>
    <property type="project" value="UniProtKB-SubCell"/>
</dbReference>
<dbReference type="GO" id="GO:0036218">
    <property type="term" value="F:dTTP diphosphatase activity"/>
    <property type="evidence" value="ECO:0007669"/>
    <property type="project" value="RHEA"/>
</dbReference>
<dbReference type="GO" id="GO:0036221">
    <property type="term" value="F:UTP diphosphatase activity"/>
    <property type="evidence" value="ECO:0007669"/>
    <property type="project" value="RHEA"/>
</dbReference>
<dbReference type="GO" id="GO:0009117">
    <property type="term" value="P:nucleotide metabolic process"/>
    <property type="evidence" value="ECO:0007669"/>
    <property type="project" value="UniProtKB-KW"/>
</dbReference>
<dbReference type="CDD" id="cd00555">
    <property type="entry name" value="Maf"/>
    <property type="match status" value="1"/>
</dbReference>
<dbReference type="FunFam" id="3.90.950.10:FF:000005">
    <property type="entry name" value="7-methyl-GTP pyrophosphatase"/>
    <property type="match status" value="1"/>
</dbReference>
<dbReference type="Gene3D" id="3.90.950.10">
    <property type="match status" value="1"/>
</dbReference>
<dbReference type="HAMAP" id="MF_00528">
    <property type="entry name" value="Maf"/>
    <property type="match status" value="1"/>
</dbReference>
<dbReference type="InterPro" id="IPR029001">
    <property type="entry name" value="ITPase-like_fam"/>
</dbReference>
<dbReference type="InterPro" id="IPR003697">
    <property type="entry name" value="Maf-like"/>
</dbReference>
<dbReference type="NCBIfam" id="TIGR00172">
    <property type="entry name" value="maf"/>
    <property type="match status" value="1"/>
</dbReference>
<dbReference type="PANTHER" id="PTHR43213">
    <property type="entry name" value="BIFUNCTIONAL DTTP/UTP PYROPHOSPHATASE/METHYLTRANSFERASE PROTEIN-RELATED"/>
    <property type="match status" value="1"/>
</dbReference>
<dbReference type="PANTHER" id="PTHR43213:SF5">
    <property type="entry name" value="BIFUNCTIONAL DTTP_UTP PYROPHOSPHATASE_METHYLTRANSFERASE PROTEIN-RELATED"/>
    <property type="match status" value="1"/>
</dbReference>
<dbReference type="Pfam" id="PF02545">
    <property type="entry name" value="Maf"/>
    <property type="match status" value="1"/>
</dbReference>
<dbReference type="PIRSF" id="PIRSF006305">
    <property type="entry name" value="Maf"/>
    <property type="match status" value="1"/>
</dbReference>
<dbReference type="SUPFAM" id="SSF52972">
    <property type="entry name" value="ITPase-like"/>
    <property type="match status" value="1"/>
</dbReference>
<proteinExistence type="inferred from homology"/>
<accession>Q9K8H3</accession>
<name>NTPPA_HALH5</name>